<comment type="subcellular location">
    <subcellularLocation>
        <location evidence="1">Nucleus</location>
    </subcellularLocation>
</comment>
<gene>
    <name type="primary">zbtb44</name>
</gene>
<keyword id="KW-0238">DNA-binding</keyword>
<keyword id="KW-0479">Metal-binding</keyword>
<keyword id="KW-0539">Nucleus</keyword>
<keyword id="KW-1185">Reference proteome</keyword>
<keyword id="KW-0677">Repeat</keyword>
<keyword id="KW-0804">Transcription</keyword>
<keyword id="KW-0805">Transcription regulation</keyword>
<keyword id="KW-0862">Zinc</keyword>
<keyword id="KW-0863">Zinc-finger</keyword>
<sequence>MGVKTFTHNSPGHSQEMLGKLNMLRNDGHFCDITIRVQDKIFRAHKVVLAACSEFFRTKLVGQAEDSSQCVLDLHHVTVTGFTPLLEYAYTATLSINTENIIDVLAAASYMQMFSVASTCSEFMKSSILWNTQQEKILDTGQENPVNCNNFRDGSLSPVSSECSVVERTIPICRESRRKRKSYIVMSPESPLKCNTQTSSPQVLNPTPSYAEARNQSVDSSHAFPWTFPFGIDRRIQSEKVKQIESRTLELPGPSEVARRVTDYVACESTKVSSPLVMEDDVRVKVERLSDEEVHEEVSQPVSASQSSMSDQQTVPGSEQVQEDLLISPQSSSIGSIDEGVSEGLPTLQSTASTSVHADDDDRLENVQYPYQLYLAPTTSSTERPSPNGPDRPFQCPTCGVRFTRIQNLKQHMLIHSGIKPFQCDRCGKKFTRAYSLKMHRLKHEAIS</sequence>
<evidence type="ECO:0000250" key="1"/>
<evidence type="ECO:0000255" key="2">
    <source>
        <dbReference type="PROSITE-ProRule" id="PRU00037"/>
    </source>
</evidence>
<evidence type="ECO:0000255" key="3">
    <source>
        <dbReference type="PROSITE-ProRule" id="PRU00042"/>
    </source>
</evidence>
<evidence type="ECO:0000256" key="4">
    <source>
        <dbReference type="SAM" id="MobiDB-lite"/>
    </source>
</evidence>
<accession>Q0P4X6</accession>
<protein>
    <recommendedName>
        <fullName>Zinc finger and BTB domain-containing protein 44</fullName>
    </recommendedName>
</protein>
<organism>
    <name type="scientific">Xenopus tropicalis</name>
    <name type="common">Western clawed frog</name>
    <name type="synonym">Silurana tropicalis</name>
    <dbReference type="NCBI Taxonomy" id="8364"/>
    <lineage>
        <taxon>Eukaryota</taxon>
        <taxon>Metazoa</taxon>
        <taxon>Chordata</taxon>
        <taxon>Craniata</taxon>
        <taxon>Vertebrata</taxon>
        <taxon>Euteleostomi</taxon>
        <taxon>Amphibia</taxon>
        <taxon>Batrachia</taxon>
        <taxon>Anura</taxon>
        <taxon>Pipoidea</taxon>
        <taxon>Pipidae</taxon>
        <taxon>Xenopodinae</taxon>
        <taxon>Xenopus</taxon>
        <taxon>Silurana</taxon>
    </lineage>
</organism>
<name>ZBT44_XENTR</name>
<proteinExistence type="evidence at transcript level"/>
<dbReference type="EMBL" id="BC121859">
    <property type="protein sequence ID" value="AAI21860.1"/>
    <property type="molecule type" value="mRNA"/>
</dbReference>
<dbReference type="RefSeq" id="NP_001072459.1">
    <property type="nucleotide sequence ID" value="NM_001078991.1"/>
</dbReference>
<dbReference type="SMR" id="Q0P4X6"/>
<dbReference type="PaxDb" id="8364-ENSXETP00000038830"/>
<dbReference type="GeneID" id="779914"/>
<dbReference type="KEGG" id="xtr:779914"/>
<dbReference type="AGR" id="Xenbase:XB-GENE-1033035"/>
<dbReference type="CTD" id="29068"/>
<dbReference type="Xenbase" id="XB-GENE-1033035">
    <property type="gene designation" value="zbtb44"/>
</dbReference>
<dbReference type="eggNOG" id="KOG1721">
    <property type="taxonomic scope" value="Eukaryota"/>
</dbReference>
<dbReference type="InParanoid" id="Q0P4X6"/>
<dbReference type="OrthoDB" id="8117402at2759"/>
<dbReference type="Proteomes" id="UP000008143">
    <property type="component" value="Chromosome 7"/>
</dbReference>
<dbReference type="GO" id="GO:0005634">
    <property type="term" value="C:nucleus"/>
    <property type="evidence" value="ECO:0007669"/>
    <property type="project" value="UniProtKB-SubCell"/>
</dbReference>
<dbReference type="GO" id="GO:0003677">
    <property type="term" value="F:DNA binding"/>
    <property type="evidence" value="ECO:0007669"/>
    <property type="project" value="UniProtKB-KW"/>
</dbReference>
<dbReference type="GO" id="GO:0008270">
    <property type="term" value="F:zinc ion binding"/>
    <property type="evidence" value="ECO:0007669"/>
    <property type="project" value="UniProtKB-KW"/>
</dbReference>
<dbReference type="CDD" id="cd18228">
    <property type="entry name" value="BTB_POZ_ZBTB44"/>
    <property type="match status" value="1"/>
</dbReference>
<dbReference type="FunFam" id="3.30.160.60:FF:000266">
    <property type="entry name" value="zinc finger and BTB domain-containing protein 44 isoform X1"/>
    <property type="match status" value="1"/>
</dbReference>
<dbReference type="FunFam" id="3.30.160.60:FF:000278">
    <property type="entry name" value="zinc finger and BTB domain-containing protein 44 isoform X1"/>
    <property type="match status" value="1"/>
</dbReference>
<dbReference type="Gene3D" id="3.30.160.60">
    <property type="entry name" value="Classic Zinc Finger"/>
    <property type="match status" value="2"/>
</dbReference>
<dbReference type="Gene3D" id="3.30.710.10">
    <property type="entry name" value="Potassium Channel Kv1.1, Chain A"/>
    <property type="match status" value="1"/>
</dbReference>
<dbReference type="InterPro" id="IPR000210">
    <property type="entry name" value="BTB/POZ_dom"/>
</dbReference>
<dbReference type="InterPro" id="IPR011333">
    <property type="entry name" value="SKP1/BTB/POZ_sf"/>
</dbReference>
<dbReference type="InterPro" id="IPR036236">
    <property type="entry name" value="Znf_C2H2_sf"/>
</dbReference>
<dbReference type="InterPro" id="IPR013087">
    <property type="entry name" value="Znf_C2H2_type"/>
</dbReference>
<dbReference type="InterPro" id="IPR050457">
    <property type="entry name" value="ZnFinger_BTB_dom_contain"/>
</dbReference>
<dbReference type="PANTHER" id="PTHR46105">
    <property type="entry name" value="AGAP004733-PA"/>
    <property type="match status" value="1"/>
</dbReference>
<dbReference type="PANTHER" id="PTHR46105:SF5">
    <property type="entry name" value="ZINC FINGER AND BTB DOMAIN-CONTAINING PROTEIN 44 ISOFORM X1"/>
    <property type="match status" value="1"/>
</dbReference>
<dbReference type="Pfam" id="PF00651">
    <property type="entry name" value="BTB"/>
    <property type="match status" value="1"/>
</dbReference>
<dbReference type="Pfam" id="PF00096">
    <property type="entry name" value="zf-C2H2"/>
    <property type="match status" value="2"/>
</dbReference>
<dbReference type="SMART" id="SM00225">
    <property type="entry name" value="BTB"/>
    <property type="match status" value="1"/>
</dbReference>
<dbReference type="SMART" id="SM00355">
    <property type="entry name" value="ZnF_C2H2"/>
    <property type="match status" value="2"/>
</dbReference>
<dbReference type="SUPFAM" id="SSF57667">
    <property type="entry name" value="beta-beta-alpha zinc fingers"/>
    <property type="match status" value="1"/>
</dbReference>
<dbReference type="SUPFAM" id="SSF54695">
    <property type="entry name" value="POZ domain"/>
    <property type="match status" value="1"/>
</dbReference>
<dbReference type="PROSITE" id="PS50097">
    <property type="entry name" value="BTB"/>
    <property type="match status" value="1"/>
</dbReference>
<dbReference type="PROSITE" id="PS00028">
    <property type="entry name" value="ZINC_FINGER_C2H2_1"/>
    <property type="match status" value="2"/>
</dbReference>
<dbReference type="PROSITE" id="PS50157">
    <property type="entry name" value="ZINC_FINGER_C2H2_2"/>
    <property type="match status" value="2"/>
</dbReference>
<reference key="1">
    <citation type="submission" date="2006-08" db="EMBL/GenBank/DDBJ databases">
        <authorList>
            <consortium name="NIH - Xenopus Gene Collection (XGC) project"/>
        </authorList>
    </citation>
    <scope>NUCLEOTIDE SEQUENCE [LARGE SCALE MRNA]</scope>
    <source>
        <tissue>Brain</tissue>
    </source>
</reference>
<feature type="chain" id="PRO_0000274611" description="Zinc finger and BTB domain-containing protein 44">
    <location>
        <begin position="1"/>
        <end position="448"/>
    </location>
</feature>
<feature type="domain" description="BTB" evidence="2">
    <location>
        <begin position="31"/>
        <end position="98"/>
    </location>
</feature>
<feature type="zinc finger region" description="C2H2-type 1" evidence="3">
    <location>
        <begin position="394"/>
        <end position="416"/>
    </location>
</feature>
<feature type="zinc finger region" description="C2H2-type 2" evidence="3">
    <location>
        <begin position="422"/>
        <end position="444"/>
    </location>
</feature>
<feature type="region of interest" description="Disordered" evidence="4">
    <location>
        <begin position="289"/>
        <end position="320"/>
    </location>
</feature>
<feature type="compositionally biased region" description="Basic and acidic residues" evidence="4">
    <location>
        <begin position="289"/>
        <end position="298"/>
    </location>
</feature>
<feature type="compositionally biased region" description="Low complexity" evidence="4">
    <location>
        <begin position="299"/>
        <end position="313"/>
    </location>
</feature>